<name>Y1662_ARCFU</name>
<organism>
    <name type="scientific">Archaeoglobus fulgidus (strain ATCC 49558 / DSM 4304 / JCM 9628 / NBRC 100126 / VC-16)</name>
    <dbReference type="NCBI Taxonomy" id="224325"/>
    <lineage>
        <taxon>Archaea</taxon>
        <taxon>Methanobacteriati</taxon>
        <taxon>Methanobacteriota</taxon>
        <taxon>Archaeoglobi</taxon>
        <taxon>Archaeoglobales</taxon>
        <taxon>Archaeoglobaceae</taxon>
        <taxon>Archaeoglobus</taxon>
    </lineage>
</organism>
<accession>O28611</accession>
<protein>
    <recommendedName>
        <fullName>Uncharacterized protein AF_1662</fullName>
    </recommendedName>
</protein>
<keyword id="KW-1185">Reference proteome</keyword>
<feature type="chain" id="PRO_0000128044" description="Uncharacterized protein AF_1662">
    <location>
        <begin position="1"/>
        <end position="89"/>
    </location>
</feature>
<proteinExistence type="predicted"/>
<dbReference type="EMBL" id="AE000782">
    <property type="protein sequence ID" value="AAB89609.1"/>
    <property type="molecule type" value="Genomic_DNA"/>
</dbReference>
<dbReference type="PIR" id="E69457">
    <property type="entry name" value="E69457"/>
</dbReference>
<dbReference type="SMR" id="O28611"/>
<dbReference type="STRING" id="224325.AF_1662"/>
<dbReference type="PaxDb" id="224325-AF_1662"/>
<dbReference type="EnsemblBacteria" id="AAB89609">
    <property type="protein sequence ID" value="AAB89609"/>
    <property type="gene ID" value="AF_1662"/>
</dbReference>
<dbReference type="KEGG" id="afu:AF_1662"/>
<dbReference type="HOGENOM" id="CLU_188830_0_0_2"/>
<dbReference type="Proteomes" id="UP000002199">
    <property type="component" value="Chromosome"/>
</dbReference>
<dbReference type="Gene3D" id="1.10.10.10">
    <property type="entry name" value="Winged helix-like DNA-binding domain superfamily/Winged helix DNA-binding domain"/>
    <property type="match status" value="1"/>
</dbReference>
<dbReference type="InterPro" id="IPR002831">
    <property type="entry name" value="Tscrpt_reg_TrmB_N"/>
</dbReference>
<dbReference type="InterPro" id="IPR036388">
    <property type="entry name" value="WH-like_DNA-bd_sf"/>
</dbReference>
<dbReference type="InterPro" id="IPR036390">
    <property type="entry name" value="WH_DNA-bd_sf"/>
</dbReference>
<dbReference type="Pfam" id="PF01978">
    <property type="entry name" value="TrmB"/>
    <property type="match status" value="1"/>
</dbReference>
<dbReference type="SUPFAM" id="SSF46785">
    <property type="entry name" value="Winged helix' DNA-binding domain"/>
    <property type="match status" value="1"/>
</dbReference>
<gene>
    <name type="ordered locus">AF_1662</name>
</gene>
<reference key="1">
    <citation type="journal article" date="1997" name="Nature">
        <title>The complete genome sequence of the hyperthermophilic, sulphate-reducing archaeon Archaeoglobus fulgidus.</title>
        <authorList>
            <person name="Klenk H.-P."/>
            <person name="Clayton R.A."/>
            <person name="Tomb J.-F."/>
            <person name="White O."/>
            <person name="Nelson K.E."/>
            <person name="Ketchum K.A."/>
            <person name="Dodson R.J."/>
            <person name="Gwinn M.L."/>
            <person name="Hickey E.K."/>
            <person name="Peterson J.D."/>
            <person name="Richardson D.L."/>
            <person name="Kerlavage A.R."/>
            <person name="Graham D.E."/>
            <person name="Kyrpides N.C."/>
            <person name="Fleischmann R.D."/>
            <person name="Quackenbush J."/>
            <person name="Lee N.H."/>
            <person name="Sutton G.G."/>
            <person name="Gill S.R."/>
            <person name="Kirkness E.F."/>
            <person name="Dougherty B.A."/>
            <person name="McKenney K."/>
            <person name="Adams M.D."/>
            <person name="Loftus B.J."/>
            <person name="Peterson S.N."/>
            <person name="Reich C.I."/>
            <person name="McNeil L.K."/>
            <person name="Badger J.H."/>
            <person name="Glodek A."/>
            <person name="Zhou L."/>
            <person name="Overbeek R."/>
            <person name="Gocayne J.D."/>
            <person name="Weidman J.F."/>
            <person name="McDonald L.A."/>
            <person name="Utterback T.R."/>
            <person name="Cotton M.D."/>
            <person name="Spriggs T."/>
            <person name="Artiach P."/>
            <person name="Kaine B.P."/>
            <person name="Sykes S.M."/>
            <person name="Sadow P.W."/>
            <person name="D'Andrea K.P."/>
            <person name="Bowman C."/>
            <person name="Fujii C."/>
            <person name="Garland S.A."/>
            <person name="Mason T.M."/>
            <person name="Olsen G.J."/>
            <person name="Fraser C.M."/>
            <person name="Smith H.O."/>
            <person name="Woese C.R."/>
            <person name="Venter J.C."/>
        </authorList>
    </citation>
    <scope>NUCLEOTIDE SEQUENCE [LARGE SCALE GENOMIC DNA]</scope>
    <source>
        <strain>ATCC 49558 / DSM 4304 / JCM 9628 / NBRC 100126 / VC-16</strain>
    </source>
</reference>
<sequence>MQIHNYTSKFILNLRKISIMKVPELIDEILLILNEEEMTERELAEKLRVERAMLRKVLEFLMEMDFVERANLKLKLSESGRRLVRLDVY</sequence>